<comment type="function">
    <text evidence="1 2 3 4 5 6">Toxic component of a type II toxin-antitoxin (TA) system. Acts as an mRNA and 23S rRNA interferase, cleaving predominantly after the first 2 Us in the sequence 5'-UUCCU-3'; in 23S rRNA only cleaves once in the ribosomal A site in dissociated but not intact ribosomes. Cleavage of 23S rRNA inhibits protein translation; the 23S rRNA region cleaved is involved in tRNA-binding in the A site, 30S and 50S subunit interaction and ribosome recycling factor association (PubMed:23650345). Upon expression in E.coli and M.smegmatis inhibits cell growth and colony formation. It dramatically increases persister cell formation in M.smegmatis upon challenge with gentamicin or kanamycin. Overexpression leads to bacteriostasis rather than bacteriocide. Its toxic effect is neutralized by coexpression with cognate antitoxin MazE3.</text>
</comment>
<comment type="activity regulation">
    <text evidence="5">Digests 23S rRNA in the absence of Mg(2+), increasing Mg(2+) concentrations decrease its efficiency.</text>
</comment>
<comment type="subunit">
    <text evidence="4 6">Forms a complex with cognate antitoxin MazE3, possibly with 1:1 stoichiometry.</text>
</comment>
<comment type="induction">
    <text evidence="6">Mildly induced (5 to 9-fold) by starvation, when grown in a non-replicating state, in the presence of isoniazid, gentamycin or rifampicin.</text>
</comment>
<comment type="disruption phenotype">
    <text evidence="6">Individual deletion of mazF3, mazF6 and mazF9 have little to no phenotype, but a triple mutant shows increased sensitivity to oxidative and antibiotic stress and starvation, decreased formation of persisters cells, and a decreased bacterial load and pathogenic damage in infected guinea pigs.</text>
</comment>
<comment type="similarity">
    <text evidence="9">Belongs to the PemK/MazF family.</text>
</comment>
<gene>
    <name type="primary">mazF3</name>
    <name evidence="7" type="synonym">mazF-mt6</name>
    <name type="ordered locus">Rv1102c</name>
</gene>
<proteinExistence type="evidence at protein level"/>
<sequence>MRPIHIAQLDKARPVLILTREVVRPHLTNVTVAPITTTVRGLATEVPVDAVNGLNQPSVVSCDNTQTIPVCDLGRQIGYLLASQEPALAEAIGNAFDLDWVVA</sequence>
<reference key="1">
    <citation type="journal article" date="1998" name="Nature">
        <title>Deciphering the biology of Mycobacterium tuberculosis from the complete genome sequence.</title>
        <authorList>
            <person name="Cole S.T."/>
            <person name="Brosch R."/>
            <person name="Parkhill J."/>
            <person name="Garnier T."/>
            <person name="Churcher C.M."/>
            <person name="Harris D.E."/>
            <person name="Gordon S.V."/>
            <person name="Eiglmeier K."/>
            <person name="Gas S."/>
            <person name="Barry C.E. III"/>
            <person name="Tekaia F."/>
            <person name="Badcock K."/>
            <person name="Basham D."/>
            <person name="Brown D."/>
            <person name="Chillingworth T."/>
            <person name="Connor R."/>
            <person name="Davies R.M."/>
            <person name="Devlin K."/>
            <person name="Feltwell T."/>
            <person name="Gentles S."/>
            <person name="Hamlin N."/>
            <person name="Holroyd S."/>
            <person name="Hornsby T."/>
            <person name="Jagels K."/>
            <person name="Krogh A."/>
            <person name="McLean J."/>
            <person name="Moule S."/>
            <person name="Murphy L.D."/>
            <person name="Oliver S."/>
            <person name="Osborne J."/>
            <person name="Quail M.A."/>
            <person name="Rajandream M.A."/>
            <person name="Rogers J."/>
            <person name="Rutter S."/>
            <person name="Seeger K."/>
            <person name="Skelton S."/>
            <person name="Squares S."/>
            <person name="Squares R."/>
            <person name="Sulston J.E."/>
            <person name="Taylor K."/>
            <person name="Whitehead S."/>
            <person name="Barrell B.G."/>
        </authorList>
    </citation>
    <scope>NUCLEOTIDE SEQUENCE [LARGE SCALE GENOMIC DNA]</scope>
    <source>
        <strain>ATCC 25618 / H37Rv</strain>
    </source>
</reference>
<reference key="2">
    <citation type="journal article" date="2006" name="J. Biol. Chem.">
        <title>Characterization of mRNA interferases from Mycobacterium tuberculosis.</title>
        <authorList>
            <person name="Zhu L."/>
            <person name="Zhang Y."/>
            <person name="Teh J.S."/>
            <person name="Zhang J."/>
            <person name="Connell N."/>
            <person name="Rubin H."/>
            <person name="Inouye M."/>
        </authorList>
    </citation>
    <scope>EXPRESSION IN E.COLI</scope>
    <scope>FUNCTION AS AN MRNA INTERFERASE</scope>
    <source>
        <strain>ATCC 25618 / H37Rv</strain>
    </source>
</reference>
<reference key="3">
    <citation type="journal article" date="2009" name="FEMS Microbiol. Lett.">
        <title>Killing activity and rescue function of genome-wide toxin-antitoxin loci of Mycobacterium tuberculosis.</title>
        <authorList>
            <person name="Gupta A."/>
        </authorList>
    </citation>
    <scope>EXPRESSION IN E.COLI</scope>
    <scope>FUNCTION AS A TOXIN</scope>
    <source>
        <strain>ATCC 25618 / H37Rv</strain>
    </source>
</reference>
<reference key="4">
    <citation type="journal article" date="2009" name="PLoS Genet.">
        <title>Comprehensive functional analysis of Mycobacterium tuberculosis toxin-antitoxin systems: implications for pathogenesis, stress responses, and evolution.</title>
        <authorList>
            <person name="Ramage H.R."/>
            <person name="Connolly L.E."/>
            <person name="Cox J.S."/>
        </authorList>
    </citation>
    <scope>EXPRESSION IN M.SMEGMATIS</scope>
    <scope>FUNCTION AS A TOXIN</scope>
    <source>
        <strain>ATCC 35801 / TMC 107 / Erdman</strain>
    </source>
</reference>
<reference key="5">
    <citation type="journal article" date="2010" name="Biochem. Biophys. Res. Commun.">
        <title>Characterization of a chromosomal toxin-antitoxin, Rv1102c-Rv1103c system in Mycobacterium tuberculosis.</title>
        <authorList>
            <person name="Han J.S."/>
            <person name="Lee J.J."/>
            <person name="Anandan T."/>
            <person name="Zeng M."/>
            <person name="Sripathi S."/>
            <person name="Jahng W.J."/>
            <person name="Lee S.H."/>
            <person name="Suh J.W."/>
            <person name="Kang C.M."/>
        </authorList>
    </citation>
    <scope>EXPRESSION IN E.COLI</scope>
    <scope>EXPRESSION IN M.SMEGMATIS</scope>
    <scope>FUNCTION AS A TOXIN</scope>
    <scope>SUBUNIT</scope>
    <scope>ROLE IN PERSISTER CELL FORMATION</scope>
    <source>
        <strain>ATCC 25618 / H37Rv</strain>
    </source>
</reference>
<reference key="6">
    <citation type="journal article" date="2013" name="Proc. Natl. Acad. Sci. U.S.A.">
        <title>Mycobacterial toxin MazF-mt6 inhibits translation through cleavage of 23S rRNA at the ribosomal A site.</title>
        <authorList>
            <person name="Schifano J.M."/>
            <person name="Edifor R."/>
            <person name="Sharp J.D."/>
            <person name="Ouyang M."/>
            <person name="Konkimalla A."/>
            <person name="Husson R.N."/>
            <person name="Woychik N.A."/>
        </authorList>
    </citation>
    <scope>FUNCTION</scope>
    <scope>SUBSTRATE SPECIFICITY</scope>
    <scope>EXPRESSION IN E.COLI</scope>
    <scope>EXPRESSION IN M.SMEGMATIS</scope>
    <source>
        <strain>H37Rv</strain>
    </source>
</reference>
<reference key="7">
    <citation type="journal article" date="2015" name="Nat. Commun.">
        <title>MazF ribonucleases promote Mycobacterium tuberculosis drug tolerance and virulence in guinea pigs.</title>
        <authorList>
            <person name="Tiwari P."/>
            <person name="Arora G."/>
            <person name="Singh M."/>
            <person name="Kidwai S."/>
            <person name="Narayan O.P."/>
            <person name="Singh R."/>
        </authorList>
    </citation>
    <scope>FUNCTION</scope>
    <scope>INTERACTION WITH MAZE3</scope>
    <scope>INDUCTION</scope>
    <scope>DISRUPTION PHENOTYPE</scope>
    <source>
        <strain>H37Rv</strain>
    </source>
</reference>
<evidence type="ECO:0000269" key="1">
    <source>
    </source>
</evidence>
<evidence type="ECO:0000269" key="2">
    <source>
    </source>
</evidence>
<evidence type="ECO:0000269" key="3">
    <source>
    </source>
</evidence>
<evidence type="ECO:0000269" key="4">
    <source>
    </source>
</evidence>
<evidence type="ECO:0000269" key="5">
    <source>
    </source>
</evidence>
<evidence type="ECO:0000269" key="6">
    <source>
    </source>
</evidence>
<evidence type="ECO:0000303" key="7">
    <source>
    </source>
</evidence>
<evidence type="ECO:0000303" key="8">
    <source>
    </source>
</evidence>
<evidence type="ECO:0000305" key="9"/>
<evidence type="ECO:0007829" key="10">
    <source>
        <dbReference type="PDB" id="5UCT"/>
    </source>
</evidence>
<name>MAZF3_MYCTU</name>
<protein>
    <recommendedName>
        <fullName evidence="9">Endoribonuclease MazF3</fullName>
        <ecNumber>3.1.-.-</ecNumber>
    </recommendedName>
    <alternativeName>
        <fullName>23S rRNA endonuclease MazF3</fullName>
    </alternativeName>
    <alternativeName>
        <fullName evidence="8">Toxin MazF3</fullName>
    </alternativeName>
    <alternativeName>
        <fullName evidence="7">mRNA interferase MazF-mt6</fullName>
    </alternativeName>
</protein>
<keyword id="KW-0002">3D-structure</keyword>
<keyword id="KW-0255">Endonuclease</keyword>
<keyword id="KW-0378">Hydrolase</keyword>
<keyword id="KW-0540">Nuclease</keyword>
<keyword id="KW-1185">Reference proteome</keyword>
<keyword id="KW-1277">Toxin-antitoxin system</keyword>
<accession>P9WIH9</accession>
<accession>L0T5Q4</accession>
<accession>O53450</accession>
<accession>Q7D8U7</accession>
<dbReference type="EC" id="3.1.-.-"/>
<dbReference type="EMBL" id="AL123456">
    <property type="protein sequence ID" value="CCP43855.1"/>
    <property type="molecule type" value="Genomic_DNA"/>
</dbReference>
<dbReference type="PIR" id="D70897">
    <property type="entry name" value="D70897"/>
</dbReference>
<dbReference type="RefSeq" id="NP_215618.1">
    <property type="nucleotide sequence ID" value="NC_000962.3"/>
</dbReference>
<dbReference type="RefSeq" id="WP_003898728.1">
    <property type="nucleotide sequence ID" value="NZ_NVQJ01000021.1"/>
</dbReference>
<dbReference type="PDB" id="5CCA">
    <property type="method" value="X-ray"/>
    <property type="resolution" value="3.20 A"/>
    <property type="chains" value="A/B=1-103"/>
</dbReference>
<dbReference type="PDB" id="5UCT">
    <property type="method" value="X-ray"/>
    <property type="resolution" value="2.70 A"/>
    <property type="chains" value="A/B=1-103"/>
</dbReference>
<dbReference type="PDBsum" id="5CCA"/>
<dbReference type="PDBsum" id="5UCT"/>
<dbReference type="SMR" id="P9WIH9"/>
<dbReference type="FunCoup" id="P9WIH9">
    <property type="interactions" value="1"/>
</dbReference>
<dbReference type="STRING" id="83332.Rv1102c"/>
<dbReference type="PaxDb" id="83332-Rv1102c"/>
<dbReference type="DNASU" id="886001"/>
<dbReference type="GeneID" id="886001"/>
<dbReference type="KEGG" id="mtu:Rv1102c"/>
<dbReference type="KEGG" id="mtv:RVBD_1102c"/>
<dbReference type="TubercuList" id="Rv1102c"/>
<dbReference type="eggNOG" id="COG2337">
    <property type="taxonomic scope" value="Bacteria"/>
</dbReference>
<dbReference type="InParanoid" id="P9WIH9"/>
<dbReference type="OrthoDB" id="5419693at2"/>
<dbReference type="PhylomeDB" id="P9WIH9"/>
<dbReference type="Proteomes" id="UP000001584">
    <property type="component" value="Chromosome"/>
</dbReference>
<dbReference type="GO" id="GO:0003677">
    <property type="term" value="F:DNA binding"/>
    <property type="evidence" value="ECO:0007669"/>
    <property type="project" value="InterPro"/>
</dbReference>
<dbReference type="GO" id="GO:0004521">
    <property type="term" value="F:RNA endonuclease activity"/>
    <property type="evidence" value="ECO:0000314"/>
    <property type="project" value="MTBBASE"/>
</dbReference>
<dbReference type="GO" id="GO:0006402">
    <property type="term" value="P:mRNA catabolic process"/>
    <property type="evidence" value="ECO:0000314"/>
    <property type="project" value="MTBBASE"/>
</dbReference>
<dbReference type="GO" id="GO:0045892">
    <property type="term" value="P:negative regulation of DNA-templated transcription"/>
    <property type="evidence" value="ECO:0000314"/>
    <property type="project" value="MTBBASE"/>
</dbReference>
<dbReference type="GO" id="GO:0045926">
    <property type="term" value="P:negative regulation of growth"/>
    <property type="evidence" value="ECO:0000314"/>
    <property type="project" value="MTBBASE"/>
</dbReference>
<dbReference type="GO" id="GO:0017148">
    <property type="term" value="P:negative regulation of translation"/>
    <property type="evidence" value="ECO:0000314"/>
    <property type="project" value="MTBBASE"/>
</dbReference>
<dbReference type="GO" id="GO:0045927">
    <property type="term" value="P:positive regulation of growth"/>
    <property type="evidence" value="ECO:0000315"/>
    <property type="project" value="MTBBASE"/>
</dbReference>
<dbReference type="GO" id="GO:0016075">
    <property type="term" value="P:rRNA catabolic process"/>
    <property type="evidence" value="ECO:0000314"/>
    <property type="project" value="UniProtKB"/>
</dbReference>
<dbReference type="GO" id="GO:0044003">
    <property type="term" value="P:symbiont-mediated perturbation of host process"/>
    <property type="evidence" value="ECO:0000315"/>
    <property type="project" value="MTBBASE"/>
</dbReference>
<dbReference type="Gene3D" id="2.30.30.110">
    <property type="match status" value="1"/>
</dbReference>
<dbReference type="InterPro" id="IPR003477">
    <property type="entry name" value="PemK-like"/>
</dbReference>
<dbReference type="InterPro" id="IPR011067">
    <property type="entry name" value="Plasmid_toxin/cell-grow_inhib"/>
</dbReference>
<dbReference type="PANTHER" id="PTHR33988:SF2">
    <property type="entry name" value="ENDORIBONUCLEASE MAZF"/>
    <property type="match status" value="1"/>
</dbReference>
<dbReference type="PANTHER" id="PTHR33988">
    <property type="entry name" value="ENDORIBONUCLEASE MAZF-RELATED"/>
    <property type="match status" value="1"/>
</dbReference>
<dbReference type="Pfam" id="PF02452">
    <property type="entry name" value="PemK_toxin"/>
    <property type="match status" value="1"/>
</dbReference>
<dbReference type="SUPFAM" id="SSF50118">
    <property type="entry name" value="Cell growth inhibitor/plasmid maintenance toxic component"/>
    <property type="match status" value="1"/>
</dbReference>
<feature type="chain" id="PRO_0000406306" description="Endoribonuclease MazF3">
    <location>
        <begin position="1"/>
        <end position="103"/>
    </location>
</feature>
<feature type="strand" evidence="10">
    <location>
        <begin position="3"/>
        <end position="17"/>
    </location>
</feature>
<feature type="helix" evidence="10">
    <location>
        <begin position="24"/>
        <end position="26"/>
    </location>
</feature>
<feature type="strand" evidence="10">
    <location>
        <begin position="28"/>
        <end position="37"/>
    </location>
</feature>
<feature type="strand" evidence="10">
    <location>
        <begin position="45"/>
        <end position="48"/>
    </location>
</feature>
<feature type="turn" evidence="10">
    <location>
        <begin position="50"/>
        <end position="53"/>
    </location>
</feature>
<feature type="strand" evidence="10">
    <location>
        <begin position="58"/>
        <end position="61"/>
    </location>
</feature>
<feature type="helix" evidence="10">
    <location>
        <begin position="62"/>
        <end position="64"/>
    </location>
</feature>
<feature type="strand" evidence="10">
    <location>
        <begin position="66"/>
        <end position="69"/>
    </location>
</feature>
<feature type="helix" evidence="10">
    <location>
        <begin position="70"/>
        <end position="72"/>
    </location>
</feature>
<feature type="strand" evidence="10">
    <location>
        <begin position="73"/>
        <end position="79"/>
    </location>
</feature>
<feature type="helix" evidence="10">
    <location>
        <begin position="82"/>
        <end position="84"/>
    </location>
</feature>
<feature type="helix" evidence="10">
    <location>
        <begin position="85"/>
        <end position="96"/>
    </location>
</feature>
<organism>
    <name type="scientific">Mycobacterium tuberculosis (strain ATCC 25618 / H37Rv)</name>
    <dbReference type="NCBI Taxonomy" id="83332"/>
    <lineage>
        <taxon>Bacteria</taxon>
        <taxon>Bacillati</taxon>
        <taxon>Actinomycetota</taxon>
        <taxon>Actinomycetes</taxon>
        <taxon>Mycobacteriales</taxon>
        <taxon>Mycobacteriaceae</taxon>
        <taxon>Mycobacterium</taxon>
        <taxon>Mycobacterium tuberculosis complex</taxon>
    </lineage>
</organism>